<evidence type="ECO:0000255" key="1">
    <source>
        <dbReference type="HAMAP-Rule" id="MF_01350"/>
    </source>
</evidence>
<accession>B3QP54</accession>
<feature type="chain" id="PRO_1000143584" description="NADH-quinone oxidoreductase subunit H">
    <location>
        <begin position="1"/>
        <end position="359"/>
    </location>
</feature>
<feature type="transmembrane region" description="Helical" evidence="1">
    <location>
        <begin position="19"/>
        <end position="39"/>
    </location>
</feature>
<feature type="transmembrane region" description="Helical" evidence="1">
    <location>
        <begin position="94"/>
        <end position="114"/>
    </location>
</feature>
<feature type="transmembrane region" description="Helical" evidence="1">
    <location>
        <begin position="127"/>
        <end position="147"/>
    </location>
</feature>
<feature type="transmembrane region" description="Helical" evidence="1">
    <location>
        <begin position="166"/>
        <end position="186"/>
    </location>
</feature>
<feature type="transmembrane region" description="Helical" evidence="1">
    <location>
        <begin position="202"/>
        <end position="222"/>
    </location>
</feature>
<feature type="transmembrane region" description="Helical" evidence="1">
    <location>
        <begin position="266"/>
        <end position="286"/>
    </location>
</feature>
<feature type="transmembrane region" description="Helical" evidence="1">
    <location>
        <begin position="301"/>
        <end position="321"/>
    </location>
</feature>
<feature type="transmembrane region" description="Helical" evidence="1">
    <location>
        <begin position="337"/>
        <end position="357"/>
    </location>
</feature>
<name>NUOH_CHLP8</name>
<reference key="1">
    <citation type="submission" date="2008-06" db="EMBL/GenBank/DDBJ databases">
        <title>Complete sequence of Chlorobaculum parvum NCIB 8327.</title>
        <authorList>
            <consortium name="US DOE Joint Genome Institute"/>
            <person name="Lucas S."/>
            <person name="Copeland A."/>
            <person name="Lapidus A."/>
            <person name="Glavina del Rio T."/>
            <person name="Dalin E."/>
            <person name="Tice H."/>
            <person name="Bruce D."/>
            <person name="Goodwin L."/>
            <person name="Pitluck S."/>
            <person name="Schmutz J."/>
            <person name="Larimer F."/>
            <person name="Land M."/>
            <person name="Hauser L."/>
            <person name="Kyrpides N."/>
            <person name="Mikhailova N."/>
            <person name="Zhao F."/>
            <person name="Li T."/>
            <person name="Liu Z."/>
            <person name="Overmann J."/>
            <person name="Bryant D.A."/>
            <person name="Richardson P."/>
        </authorList>
    </citation>
    <scope>NUCLEOTIDE SEQUENCE [LARGE SCALE GENOMIC DNA]</scope>
    <source>
        <strain>DSM 263 / NCIMB 8327</strain>
    </source>
</reference>
<sequence>MSSSPSLNTWSDALSGLSIGWFPLGLVIIAAIPLVFIALYALTYGVYGERKISAFMQDRLGPMEVGIWGLLQTLADILKLLQKEDIVPKLADKFLFVIGPGILFVGSFLAFAVLPFGPAFIGADLNVGLFYAVGIVAIEVVGILAAGWGSNNKWALYGAVRSVAQIVSYEIPASIALLCAAMLAGTLSMQQITMMQAGPGGFMHWFLFTNPIAWLPFLIYFISSLAETNRAPFDIPEAESELVAGYFTEYSGMKFAVIFLAEYGRMFMVSAIISIAFLGGWTSPLPNIGGLELNTMTSGPVWGAFWIIMKGFFFIFVQMWLRWTLPRLRVDQLMYLCWKVLTPFSLIAFVLTAIWVINH</sequence>
<comment type="function">
    <text evidence="1">NDH-1 shuttles electrons from NADH, via FMN and iron-sulfur (Fe-S) centers, to quinones in the respiratory chain. The immediate electron acceptor for the enzyme in this species is believed to be ubiquinone. Couples the redox reaction to proton translocation (for every two electrons transferred, four hydrogen ions are translocated across the cytoplasmic membrane), and thus conserves the redox energy in a proton gradient. This subunit may bind ubiquinone.</text>
</comment>
<comment type="catalytic activity">
    <reaction evidence="1">
        <text>a quinone + NADH + 5 H(+)(in) = a quinol + NAD(+) + 4 H(+)(out)</text>
        <dbReference type="Rhea" id="RHEA:57888"/>
        <dbReference type="ChEBI" id="CHEBI:15378"/>
        <dbReference type="ChEBI" id="CHEBI:24646"/>
        <dbReference type="ChEBI" id="CHEBI:57540"/>
        <dbReference type="ChEBI" id="CHEBI:57945"/>
        <dbReference type="ChEBI" id="CHEBI:132124"/>
    </reaction>
</comment>
<comment type="subunit">
    <text evidence="1">NDH-1 is composed of 14 different subunits. Subunits NuoA, H, J, K, L, M, N constitute the membrane sector of the complex.</text>
</comment>
<comment type="subcellular location">
    <subcellularLocation>
        <location evidence="1">Cell inner membrane</location>
        <topology evidence="1">Multi-pass membrane protein</topology>
    </subcellularLocation>
</comment>
<comment type="similarity">
    <text evidence="1">Belongs to the complex I subunit 1 family.</text>
</comment>
<organism>
    <name type="scientific">Chlorobaculum parvum (strain DSM 263 / NCIMB 8327)</name>
    <name type="common">Chlorobium vibrioforme subsp. thiosulfatophilum</name>
    <dbReference type="NCBI Taxonomy" id="517417"/>
    <lineage>
        <taxon>Bacteria</taxon>
        <taxon>Pseudomonadati</taxon>
        <taxon>Chlorobiota</taxon>
        <taxon>Chlorobiia</taxon>
        <taxon>Chlorobiales</taxon>
        <taxon>Chlorobiaceae</taxon>
        <taxon>Chlorobaculum</taxon>
    </lineage>
</organism>
<protein>
    <recommendedName>
        <fullName evidence="1">NADH-quinone oxidoreductase subunit H</fullName>
        <ecNumber evidence="1">7.1.1.-</ecNumber>
    </recommendedName>
    <alternativeName>
        <fullName evidence="1">NADH dehydrogenase I subunit H</fullName>
    </alternativeName>
    <alternativeName>
        <fullName evidence="1">NDH-1 subunit H</fullName>
    </alternativeName>
</protein>
<gene>
    <name evidence="1" type="primary">nuoH</name>
    <name type="ordered locus">Cpar_1304</name>
</gene>
<proteinExistence type="inferred from homology"/>
<dbReference type="EC" id="7.1.1.-" evidence="1"/>
<dbReference type="EMBL" id="CP001099">
    <property type="protein sequence ID" value="ACF11707.1"/>
    <property type="molecule type" value="Genomic_DNA"/>
</dbReference>
<dbReference type="RefSeq" id="WP_012502540.1">
    <property type="nucleotide sequence ID" value="NC_011027.1"/>
</dbReference>
<dbReference type="SMR" id="B3QP54"/>
<dbReference type="STRING" id="517417.Cpar_1304"/>
<dbReference type="KEGG" id="cpc:Cpar_1304"/>
<dbReference type="eggNOG" id="COG1005">
    <property type="taxonomic scope" value="Bacteria"/>
</dbReference>
<dbReference type="HOGENOM" id="CLU_015134_0_1_10"/>
<dbReference type="OrthoDB" id="9803734at2"/>
<dbReference type="Proteomes" id="UP000008811">
    <property type="component" value="Chromosome"/>
</dbReference>
<dbReference type="GO" id="GO:0005886">
    <property type="term" value="C:plasma membrane"/>
    <property type="evidence" value="ECO:0007669"/>
    <property type="project" value="UniProtKB-SubCell"/>
</dbReference>
<dbReference type="GO" id="GO:0003954">
    <property type="term" value="F:NADH dehydrogenase activity"/>
    <property type="evidence" value="ECO:0007669"/>
    <property type="project" value="TreeGrafter"/>
</dbReference>
<dbReference type="GO" id="GO:0016655">
    <property type="term" value="F:oxidoreductase activity, acting on NAD(P)H, quinone or similar compound as acceptor"/>
    <property type="evidence" value="ECO:0007669"/>
    <property type="project" value="UniProtKB-UniRule"/>
</dbReference>
<dbReference type="GO" id="GO:0048038">
    <property type="term" value="F:quinone binding"/>
    <property type="evidence" value="ECO:0007669"/>
    <property type="project" value="UniProtKB-KW"/>
</dbReference>
<dbReference type="GO" id="GO:0009060">
    <property type="term" value="P:aerobic respiration"/>
    <property type="evidence" value="ECO:0007669"/>
    <property type="project" value="TreeGrafter"/>
</dbReference>
<dbReference type="HAMAP" id="MF_01350">
    <property type="entry name" value="NDH1_NuoH"/>
    <property type="match status" value="1"/>
</dbReference>
<dbReference type="InterPro" id="IPR001694">
    <property type="entry name" value="NADH_UbQ_OxRdtase_su1/FPO"/>
</dbReference>
<dbReference type="InterPro" id="IPR018086">
    <property type="entry name" value="NADH_UbQ_OxRdtase_su1_CS"/>
</dbReference>
<dbReference type="NCBIfam" id="NF004741">
    <property type="entry name" value="PRK06076.1-2"/>
    <property type="match status" value="1"/>
</dbReference>
<dbReference type="PANTHER" id="PTHR11432">
    <property type="entry name" value="NADH DEHYDROGENASE SUBUNIT 1"/>
    <property type="match status" value="1"/>
</dbReference>
<dbReference type="PANTHER" id="PTHR11432:SF3">
    <property type="entry name" value="NADH-UBIQUINONE OXIDOREDUCTASE CHAIN 1"/>
    <property type="match status" value="1"/>
</dbReference>
<dbReference type="Pfam" id="PF00146">
    <property type="entry name" value="NADHdh"/>
    <property type="match status" value="1"/>
</dbReference>
<dbReference type="PROSITE" id="PS00667">
    <property type="entry name" value="COMPLEX1_ND1_1"/>
    <property type="match status" value="1"/>
</dbReference>
<dbReference type="PROSITE" id="PS00668">
    <property type="entry name" value="COMPLEX1_ND1_2"/>
    <property type="match status" value="1"/>
</dbReference>
<keyword id="KW-0997">Cell inner membrane</keyword>
<keyword id="KW-1003">Cell membrane</keyword>
<keyword id="KW-0472">Membrane</keyword>
<keyword id="KW-0520">NAD</keyword>
<keyword id="KW-0874">Quinone</keyword>
<keyword id="KW-1278">Translocase</keyword>
<keyword id="KW-0812">Transmembrane</keyword>
<keyword id="KW-1133">Transmembrane helix</keyword>
<keyword id="KW-0830">Ubiquinone</keyword>